<keyword id="KW-0002">3D-structure</keyword>
<keyword id="KW-0687">Ribonucleoprotein</keyword>
<keyword id="KW-0689">Ribosomal protein</keyword>
<proteinExistence type="evidence at protein level"/>
<accession>A2RNN5</accession>
<reference key="1">
    <citation type="journal article" date="2007" name="J. Bacteriol.">
        <title>The complete genome sequence of the lactic acid bacterial paradigm Lactococcus lactis subsp. cremoris MG1363.</title>
        <authorList>
            <person name="Wegmann U."/>
            <person name="O'Connell-Motherway M."/>
            <person name="Zomer A."/>
            <person name="Buist G."/>
            <person name="Shearman C."/>
            <person name="Canchaya C."/>
            <person name="Ventura M."/>
            <person name="Goesmann A."/>
            <person name="Gasson M.J."/>
            <person name="Kuipers O.P."/>
            <person name="van Sinderen D."/>
            <person name="Kok J."/>
        </authorList>
    </citation>
    <scope>NUCLEOTIDE SEQUENCE [LARGE SCALE GENOMIC DNA]</scope>
    <source>
        <strain>MG1363</strain>
    </source>
</reference>
<protein>
    <recommendedName>
        <fullName evidence="1">Large ribosomal subunit protein uL30</fullName>
    </recommendedName>
    <alternativeName>
        <fullName evidence="2">50S ribosomal protein L30</fullName>
    </alternativeName>
</protein>
<organism>
    <name type="scientific">Lactococcus lactis subsp. cremoris (strain MG1363)</name>
    <dbReference type="NCBI Taxonomy" id="416870"/>
    <lineage>
        <taxon>Bacteria</taxon>
        <taxon>Bacillati</taxon>
        <taxon>Bacillota</taxon>
        <taxon>Bacilli</taxon>
        <taxon>Lactobacillales</taxon>
        <taxon>Streptococcaceae</taxon>
        <taxon>Lactococcus</taxon>
        <taxon>Lactococcus cremoris subsp. cremoris</taxon>
    </lineage>
</organism>
<dbReference type="EMBL" id="AM406671">
    <property type="protein sequence ID" value="CAL98926.1"/>
    <property type="molecule type" value="Genomic_DNA"/>
</dbReference>
<dbReference type="RefSeq" id="WP_003129921.1">
    <property type="nucleotide sequence ID" value="NZ_WJVF01000005.1"/>
</dbReference>
<dbReference type="PDB" id="5MYJ">
    <property type="method" value="EM"/>
    <property type="resolution" value="5.60 A"/>
    <property type="chains" value="B2=1-59"/>
</dbReference>
<dbReference type="PDBsum" id="5MYJ"/>
<dbReference type="EMDB" id="EMD-3581"/>
<dbReference type="SMR" id="A2RNN5"/>
<dbReference type="STRING" id="416870.llmg_2363"/>
<dbReference type="GeneID" id="89634428"/>
<dbReference type="KEGG" id="llm:llmg_2363"/>
<dbReference type="eggNOG" id="COG1841">
    <property type="taxonomic scope" value="Bacteria"/>
</dbReference>
<dbReference type="HOGENOM" id="CLU_131047_2_1_9"/>
<dbReference type="OrthoDB" id="9812790at2"/>
<dbReference type="PhylomeDB" id="A2RNN5"/>
<dbReference type="Proteomes" id="UP000000364">
    <property type="component" value="Chromosome"/>
</dbReference>
<dbReference type="GO" id="GO:0022625">
    <property type="term" value="C:cytosolic large ribosomal subunit"/>
    <property type="evidence" value="ECO:0007669"/>
    <property type="project" value="TreeGrafter"/>
</dbReference>
<dbReference type="GO" id="GO:0003735">
    <property type="term" value="F:structural constituent of ribosome"/>
    <property type="evidence" value="ECO:0007669"/>
    <property type="project" value="InterPro"/>
</dbReference>
<dbReference type="GO" id="GO:0006412">
    <property type="term" value="P:translation"/>
    <property type="evidence" value="ECO:0007669"/>
    <property type="project" value="UniProtKB-UniRule"/>
</dbReference>
<dbReference type="CDD" id="cd01658">
    <property type="entry name" value="Ribosomal_L30"/>
    <property type="match status" value="1"/>
</dbReference>
<dbReference type="FunFam" id="3.30.1390.20:FF:000001">
    <property type="entry name" value="50S ribosomal protein L30"/>
    <property type="match status" value="1"/>
</dbReference>
<dbReference type="Gene3D" id="3.30.1390.20">
    <property type="entry name" value="Ribosomal protein L30, ferredoxin-like fold domain"/>
    <property type="match status" value="1"/>
</dbReference>
<dbReference type="HAMAP" id="MF_01371_B">
    <property type="entry name" value="Ribosomal_uL30_B"/>
    <property type="match status" value="1"/>
</dbReference>
<dbReference type="InterPro" id="IPR036919">
    <property type="entry name" value="Ribo_uL30_ferredoxin-like_sf"/>
</dbReference>
<dbReference type="InterPro" id="IPR005996">
    <property type="entry name" value="Ribosomal_uL30_bac-type"/>
</dbReference>
<dbReference type="InterPro" id="IPR018038">
    <property type="entry name" value="Ribosomal_uL30_CS"/>
</dbReference>
<dbReference type="InterPro" id="IPR016082">
    <property type="entry name" value="Ribosomal_uL30_ferredoxin-like"/>
</dbReference>
<dbReference type="NCBIfam" id="TIGR01308">
    <property type="entry name" value="rpmD_bact"/>
    <property type="match status" value="1"/>
</dbReference>
<dbReference type="PANTHER" id="PTHR15892:SF2">
    <property type="entry name" value="LARGE RIBOSOMAL SUBUNIT PROTEIN UL30M"/>
    <property type="match status" value="1"/>
</dbReference>
<dbReference type="PANTHER" id="PTHR15892">
    <property type="entry name" value="MITOCHONDRIAL RIBOSOMAL PROTEIN L30"/>
    <property type="match status" value="1"/>
</dbReference>
<dbReference type="Pfam" id="PF00327">
    <property type="entry name" value="Ribosomal_L30"/>
    <property type="match status" value="1"/>
</dbReference>
<dbReference type="PIRSF" id="PIRSF002211">
    <property type="entry name" value="Ribosomal_L30_bac-type"/>
    <property type="match status" value="1"/>
</dbReference>
<dbReference type="SUPFAM" id="SSF55129">
    <property type="entry name" value="Ribosomal protein L30p/L7e"/>
    <property type="match status" value="1"/>
</dbReference>
<dbReference type="PROSITE" id="PS00634">
    <property type="entry name" value="RIBOSOMAL_L30"/>
    <property type="match status" value="1"/>
</dbReference>
<evidence type="ECO:0000255" key="1">
    <source>
        <dbReference type="HAMAP-Rule" id="MF_01371"/>
    </source>
</evidence>
<evidence type="ECO:0000305" key="2"/>
<comment type="subunit">
    <text evidence="1">Part of the 50S ribosomal subunit.</text>
</comment>
<comment type="similarity">
    <text evidence="1">Belongs to the universal ribosomal protein uL30 family.</text>
</comment>
<name>RL30_LACLM</name>
<feature type="chain" id="PRO_1000056056" description="Large ribosomal subunit protein uL30">
    <location>
        <begin position="1"/>
        <end position="59"/>
    </location>
</feature>
<sequence length="59" mass="6193">MAQIKITLVNSPIGRIPAQRKTVKALGLGKLNSSVVKEGSPAILGMVNSISHLVKVEEA</sequence>
<gene>
    <name evidence="1" type="primary">rpmD</name>
    <name type="ordered locus">llmg_2363</name>
</gene>